<geneLocation type="chloroplast"/>
<dbReference type="EMBL" id="EU262890">
    <property type="protein sequence ID" value="ABX10049.1"/>
    <property type="molecule type" value="Genomic_DNA"/>
</dbReference>
<dbReference type="RefSeq" id="YP_001687295.1">
    <property type="nucleotide sequence ID" value="NC_010360.2"/>
</dbReference>
<dbReference type="SMR" id="B0Z556"/>
<dbReference type="GeneID" id="5955336"/>
<dbReference type="GO" id="GO:0009706">
    <property type="term" value="C:chloroplast inner membrane"/>
    <property type="evidence" value="ECO:0007669"/>
    <property type="project" value="UniProtKB-SubCell"/>
</dbReference>
<dbReference type="GO" id="GO:0015297">
    <property type="term" value="F:antiporter activity"/>
    <property type="evidence" value="ECO:0007669"/>
    <property type="project" value="UniProtKB-KW"/>
</dbReference>
<dbReference type="GO" id="GO:0015078">
    <property type="term" value="F:proton transmembrane transporter activity"/>
    <property type="evidence" value="ECO:0007669"/>
    <property type="project" value="UniProtKB-UniRule"/>
</dbReference>
<dbReference type="GO" id="GO:0006813">
    <property type="term" value="P:potassium ion transport"/>
    <property type="evidence" value="ECO:0007669"/>
    <property type="project" value="UniProtKB-UniRule"/>
</dbReference>
<dbReference type="HAMAP" id="MF_01308">
    <property type="entry name" value="CemA_PxcA"/>
    <property type="match status" value="1"/>
</dbReference>
<dbReference type="InterPro" id="IPR004282">
    <property type="entry name" value="CemA"/>
</dbReference>
<dbReference type="PANTHER" id="PTHR33650:SF2">
    <property type="entry name" value="CHLOROPLAST ENVELOPE MEMBRANE PROTEIN"/>
    <property type="match status" value="1"/>
</dbReference>
<dbReference type="PANTHER" id="PTHR33650">
    <property type="entry name" value="CHLOROPLAST ENVELOPE MEMBRANE PROTEIN-RELATED"/>
    <property type="match status" value="1"/>
</dbReference>
<dbReference type="Pfam" id="PF03040">
    <property type="entry name" value="CemA"/>
    <property type="match status" value="1"/>
</dbReference>
<comment type="function">
    <text evidence="1">Contributes to K(+)/H(+) antiport activity by supporting proton efflux to control proton extrusion and homeostasis in chloroplasts in a light-dependent manner to modulate photosynthesis. Prevents excessive induction of non-photochemical quenching (NPQ) under continuous-light conditions. Indirectly promotes efficient inorganic carbon uptake into chloroplasts.</text>
</comment>
<comment type="catalytic activity">
    <reaction evidence="1">
        <text>K(+)(in) + H(+)(out) = K(+)(out) + H(+)(in)</text>
        <dbReference type="Rhea" id="RHEA:29467"/>
        <dbReference type="ChEBI" id="CHEBI:15378"/>
        <dbReference type="ChEBI" id="CHEBI:29103"/>
    </reaction>
</comment>
<comment type="subcellular location">
    <subcellularLocation>
        <location evidence="1">Plastid</location>
        <location evidence="1">Chloroplast inner membrane</location>
        <topology evidence="1">Multi-pass membrane protein</topology>
    </subcellularLocation>
</comment>
<comment type="similarity">
    <text evidence="1 2">Belongs to the CemA family.</text>
</comment>
<name>CEMA_OENGL</name>
<gene>
    <name evidence="1" type="primary">cemA</name>
</gene>
<proteinExistence type="evidence at protein level"/>
<protein>
    <recommendedName>
        <fullName evidence="1">Potassium/proton antiporter CemA</fullName>
    </recommendedName>
    <alternativeName>
        <fullName evidence="1">Chloroplast envelope membrane protein A</fullName>
        <shortName evidence="1">CemA</shortName>
    </alternativeName>
</protein>
<feature type="chain" id="PRO_0000346546" description="Potassium/proton antiporter CemA">
    <location>
        <begin position="1"/>
        <end position="214"/>
    </location>
</feature>
<feature type="transmembrane region" description="Helical" evidence="1">
    <location>
        <begin position="92"/>
        <end position="112"/>
    </location>
</feature>
<feature type="transmembrane region" description="Helical" evidence="1">
    <location>
        <begin position="174"/>
        <end position="194"/>
    </location>
</feature>
<organism>
    <name type="scientific">Oenothera glazioviana</name>
    <name type="common">Large-flowered evening primrose</name>
    <name type="synonym">Oenothera erythrosepala</name>
    <dbReference type="NCBI Taxonomy" id="482428"/>
    <lineage>
        <taxon>Eukaryota</taxon>
        <taxon>Viridiplantae</taxon>
        <taxon>Streptophyta</taxon>
        <taxon>Embryophyta</taxon>
        <taxon>Tracheophyta</taxon>
        <taxon>Spermatophyta</taxon>
        <taxon>Magnoliopsida</taxon>
        <taxon>eudicotyledons</taxon>
        <taxon>Gunneridae</taxon>
        <taxon>Pentapetalae</taxon>
        <taxon>rosids</taxon>
        <taxon>malvids</taxon>
        <taxon>Myrtales</taxon>
        <taxon>Onagraceae</taxon>
        <taxon>Onagroideae</taxon>
        <taxon>Onagreae</taxon>
        <taxon>Oenothera</taxon>
    </lineage>
</organism>
<keyword id="KW-0050">Antiport</keyword>
<keyword id="KW-0150">Chloroplast</keyword>
<keyword id="KW-0375">Hydrogen ion transport</keyword>
<keyword id="KW-0406">Ion transport</keyword>
<keyword id="KW-0472">Membrane</keyword>
<keyword id="KW-0934">Plastid</keyword>
<keyword id="KW-1001">Plastid inner membrane</keyword>
<keyword id="KW-0630">Potassium</keyword>
<keyword id="KW-0633">Potassium transport</keyword>
<keyword id="KW-0812">Transmembrane</keyword>
<keyword id="KW-1133">Transmembrane helix</keyword>
<keyword id="KW-0813">Transport</keyword>
<accession>B0Z556</accession>
<evidence type="ECO:0000255" key="1">
    <source>
        <dbReference type="HAMAP-Rule" id="MF_01308"/>
    </source>
</evidence>
<evidence type="ECO:0000305" key="2"/>
<reference key="1">
    <citation type="journal article" date="2008" name="Nucleic Acids Res.">
        <title>The complete nucleotide sequences of the five genetically distinct plastid genomes of Oenothera, subsection Oenothera: I. Sequence evaluation and plastome evolution.</title>
        <authorList>
            <person name="Greiner S."/>
            <person name="Wang X."/>
            <person name="Rauwolf U."/>
            <person name="Silber M.V."/>
            <person name="Mayer K."/>
            <person name="Meurer J."/>
            <person name="Haberer G."/>
            <person name="Herrmann R.G."/>
        </authorList>
    </citation>
    <scope>NUCLEOTIDE SEQUENCE [LARGE SCALE GENOMIC DNA]</scope>
    <scope>IDENTIFICATION BY IMMUNOBLOTTING</scope>
    <source>
        <strain>cv. Rr-lamarckiana Sweden</strain>
    </source>
</reference>
<sequence length="214" mass="25474">MVFFPWWISLLFNKGLESWVTNWWNTTHSETFLTDMQEKSILDKFIELEELLLLDEMINEYPETHLQTLRIGIHKEMVRLIKMRNEDHIHTILHLSTNIICFIIFRGYSILGNKELLILNSWMQEFLYNLSDTIKAFSILLLTDFCIGFHSPHGWELMIAYVYKDFGFAQNDQIISGLVSTFPVILDTIFKYWIFRYLNRVSPSLVVIYDSMND</sequence>